<comment type="function">
    <text evidence="1">Catalyzes the synthesis of Und-PP-GlcNAc-ManNAcA-Fuc4NAc (Lipid III), the third lipid-linked intermediate involved in ECA synthesis.</text>
</comment>
<comment type="catalytic activity">
    <reaction evidence="1">
        <text>beta-D-ManNAcA-(1-&gt;4)-alpha-D-GlcNAc-di-trans,octa-cis-undecaprenyl diphosphate + dTDP-4-acetamido-4,6-dideoxy-alpha-D-galactose = alpha-D-FucNAc4-(1-&gt;4)-beta-D-ManNAcA-(1-&gt;4)-D-GlcNAc-undecaprenyl diphosphate + dTDP + H(+)</text>
        <dbReference type="Rhea" id="RHEA:28759"/>
        <dbReference type="ChEBI" id="CHEBI:15378"/>
        <dbReference type="ChEBI" id="CHEBI:58369"/>
        <dbReference type="ChEBI" id="CHEBI:61495"/>
        <dbReference type="ChEBI" id="CHEBI:61496"/>
        <dbReference type="ChEBI" id="CHEBI:68493"/>
        <dbReference type="EC" id="2.4.1.325"/>
    </reaction>
</comment>
<comment type="pathway">
    <text evidence="1">Bacterial outer membrane biogenesis; enterobacterial common antigen biosynthesis.</text>
</comment>
<comment type="subcellular location">
    <subcellularLocation>
        <location evidence="1">Cell inner membrane</location>
        <topology evidence="1">Peripheral membrane protein</topology>
    </subcellularLocation>
</comment>
<comment type="similarity">
    <text evidence="1">Belongs to the glycosyltransferase 56 family.</text>
</comment>
<proteinExistence type="inferred from homology"/>
<evidence type="ECO:0000255" key="1">
    <source>
        <dbReference type="HAMAP-Rule" id="MF_01002"/>
    </source>
</evidence>
<accession>B5RFR1</accession>
<reference key="1">
    <citation type="journal article" date="2008" name="Genome Res.">
        <title>Comparative genome analysis of Salmonella enteritidis PT4 and Salmonella gallinarum 287/91 provides insights into evolutionary and host adaptation pathways.</title>
        <authorList>
            <person name="Thomson N.R."/>
            <person name="Clayton D.J."/>
            <person name="Windhorst D."/>
            <person name="Vernikos G."/>
            <person name="Davidson S."/>
            <person name="Churcher C."/>
            <person name="Quail M.A."/>
            <person name="Stevens M."/>
            <person name="Jones M.A."/>
            <person name="Watson M."/>
            <person name="Barron A."/>
            <person name="Layton A."/>
            <person name="Pickard D."/>
            <person name="Kingsley R.A."/>
            <person name="Bignell A."/>
            <person name="Clark L."/>
            <person name="Harris B."/>
            <person name="Ormond D."/>
            <person name="Abdellah Z."/>
            <person name="Brooks K."/>
            <person name="Cherevach I."/>
            <person name="Chillingworth T."/>
            <person name="Woodward J."/>
            <person name="Norberczak H."/>
            <person name="Lord A."/>
            <person name="Arrowsmith C."/>
            <person name="Jagels K."/>
            <person name="Moule S."/>
            <person name="Mungall K."/>
            <person name="Saunders M."/>
            <person name="Whitehead S."/>
            <person name="Chabalgoity J.A."/>
            <person name="Maskell D."/>
            <person name="Humphreys T."/>
            <person name="Roberts M."/>
            <person name="Barrow P.A."/>
            <person name="Dougan G."/>
            <person name="Parkhill J."/>
        </authorList>
    </citation>
    <scope>NUCLEOTIDE SEQUENCE [LARGE SCALE GENOMIC DNA]</scope>
    <source>
        <strain>287/91 / NCTC 13346</strain>
    </source>
</reference>
<dbReference type="EC" id="2.4.1.325" evidence="1"/>
<dbReference type="EMBL" id="AM933173">
    <property type="protein sequence ID" value="CAR39305.1"/>
    <property type="molecule type" value="Genomic_DNA"/>
</dbReference>
<dbReference type="RefSeq" id="WP_000217198.1">
    <property type="nucleotide sequence ID" value="NC_011274.1"/>
</dbReference>
<dbReference type="CAZy" id="GT56">
    <property type="family name" value="Glycosyltransferase Family 56"/>
</dbReference>
<dbReference type="KEGG" id="seg:SG3516"/>
<dbReference type="HOGENOM" id="CLU_066584_0_0_6"/>
<dbReference type="UniPathway" id="UPA00566"/>
<dbReference type="Proteomes" id="UP000008321">
    <property type="component" value="Chromosome"/>
</dbReference>
<dbReference type="GO" id="GO:0005886">
    <property type="term" value="C:plasma membrane"/>
    <property type="evidence" value="ECO:0007669"/>
    <property type="project" value="UniProtKB-SubCell"/>
</dbReference>
<dbReference type="GO" id="GO:0102031">
    <property type="term" value="F:4-acetamido-4,6-dideoxy-D-galactose transferase activity"/>
    <property type="evidence" value="ECO:0007669"/>
    <property type="project" value="UniProtKB-EC"/>
</dbReference>
<dbReference type="GO" id="GO:0008417">
    <property type="term" value="F:fucosyltransferase activity"/>
    <property type="evidence" value="ECO:0007669"/>
    <property type="project" value="InterPro"/>
</dbReference>
<dbReference type="GO" id="GO:0009246">
    <property type="term" value="P:enterobacterial common antigen biosynthetic process"/>
    <property type="evidence" value="ECO:0007669"/>
    <property type="project" value="UniProtKB-UniRule"/>
</dbReference>
<dbReference type="GO" id="GO:0036065">
    <property type="term" value="P:fucosylation"/>
    <property type="evidence" value="ECO:0007669"/>
    <property type="project" value="InterPro"/>
</dbReference>
<dbReference type="HAMAP" id="MF_01002">
    <property type="entry name" value="WecF_RffT"/>
    <property type="match status" value="1"/>
</dbReference>
<dbReference type="InterPro" id="IPR009993">
    <property type="entry name" value="WecF"/>
</dbReference>
<dbReference type="NCBIfam" id="NF002753">
    <property type="entry name" value="PRK02797.1-2"/>
    <property type="match status" value="1"/>
</dbReference>
<dbReference type="NCBIfam" id="NF002754">
    <property type="entry name" value="PRK02797.1-3"/>
    <property type="match status" value="1"/>
</dbReference>
<dbReference type="Pfam" id="PF07429">
    <property type="entry name" value="Glyco_transf_56"/>
    <property type="match status" value="1"/>
</dbReference>
<keyword id="KW-0997">Cell inner membrane</keyword>
<keyword id="KW-1003">Cell membrane</keyword>
<keyword id="KW-0328">Glycosyltransferase</keyword>
<keyword id="KW-0472">Membrane</keyword>
<keyword id="KW-0808">Transferase</keyword>
<feature type="chain" id="PRO_1000134606" description="TDP-N-acetylfucosamine:lipid II N-acetylfucosaminyltransferase">
    <location>
        <begin position="1"/>
        <end position="359"/>
    </location>
</feature>
<protein>
    <recommendedName>
        <fullName evidence="1">TDP-N-acetylfucosamine:lipid II N-acetylfucosaminyltransferase</fullName>
        <ecNumber evidence="1">2.4.1.325</ecNumber>
    </recommendedName>
    <alternativeName>
        <fullName evidence="1">4-alpha-L-fucosyltransferase</fullName>
    </alternativeName>
    <alternativeName>
        <fullName evidence="1">TDP-Fuc4NAc:lipid II Fuc4NAc transferase</fullName>
        <shortName evidence="1">Fuc4NAc transferase</shortName>
    </alternativeName>
</protein>
<organism>
    <name type="scientific">Salmonella gallinarum (strain 287/91 / NCTC 13346)</name>
    <dbReference type="NCBI Taxonomy" id="550538"/>
    <lineage>
        <taxon>Bacteria</taxon>
        <taxon>Pseudomonadati</taxon>
        <taxon>Pseudomonadota</taxon>
        <taxon>Gammaproteobacteria</taxon>
        <taxon>Enterobacterales</taxon>
        <taxon>Enterobacteriaceae</taxon>
        <taxon>Salmonella</taxon>
    </lineage>
</organism>
<name>WECF_SALG2</name>
<gene>
    <name evidence="1" type="primary">wecF</name>
    <name evidence="1" type="synonym">rffT</name>
    <name type="ordered locus">SG3516</name>
</gene>
<sequence>MTVLIHVLGSDIPHHNHTVLRFFNDTLAATSEHAREFMVAGEDNGFTESCPALSLRFYGSKKALAQAVIAKAKANRRQRFFFHGQFNTSLWLALLSGGIKPAQFYWHIWGADLYEVSNGLKFRLFYPLRRIAQGRVGCVFATRGDLSYFARQHPNVRGELLYFPTRMDPSLNAMAKECQRAGKLTILVGNSGDRSNQHIAALRAVYQQFGDTVNVVVPMGYPANNQAYIDEVRQAGLALFSAENLQILSEKMEFDAYLALLRQCDLGYFIFARQQGIGTLCLLIQADIPCVLNRDNPFWQDMAEQHLPVLFTTDDLNEQVVREAQRQLASVDKSGITFFSPNYLQPWHNALRIAAGEAE</sequence>